<name>REX_STAAS</name>
<proteinExistence type="inferred from homology"/>
<gene>
    <name evidence="1" type="primary">rex</name>
    <name type="ordered locus">SAS1951</name>
</gene>
<reference key="1">
    <citation type="journal article" date="2004" name="Proc. Natl. Acad. Sci. U.S.A.">
        <title>Complete genomes of two clinical Staphylococcus aureus strains: evidence for the rapid evolution of virulence and drug resistance.</title>
        <authorList>
            <person name="Holden M.T.G."/>
            <person name="Feil E.J."/>
            <person name="Lindsay J.A."/>
            <person name="Peacock S.J."/>
            <person name="Day N.P.J."/>
            <person name="Enright M.C."/>
            <person name="Foster T.J."/>
            <person name="Moore C.E."/>
            <person name="Hurst L."/>
            <person name="Atkin R."/>
            <person name="Barron A."/>
            <person name="Bason N."/>
            <person name="Bentley S.D."/>
            <person name="Chillingworth C."/>
            <person name="Chillingworth T."/>
            <person name="Churcher C."/>
            <person name="Clark L."/>
            <person name="Corton C."/>
            <person name="Cronin A."/>
            <person name="Doggett J."/>
            <person name="Dowd L."/>
            <person name="Feltwell T."/>
            <person name="Hance Z."/>
            <person name="Harris B."/>
            <person name="Hauser H."/>
            <person name="Holroyd S."/>
            <person name="Jagels K."/>
            <person name="James K.D."/>
            <person name="Lennard N."/>
            <person name="Line A."/>
            <person name="Mayes R."/>
            <person name="Moule S."/>
            <person name="Mungall K."/>
            <person name="Ormond D."/>
            <person name="Quail M.A."/>
            <person name="Rabbinowitsch E."/>
            <person name="Rutherford K.M."/>
            <person name="Sanders M."/>
            <person name="Sharp S."/>
            <person name="Simmonds M."/>
            <person name="Stevens K."/>
            <person name="Whitehead S."/>
            <person name="Barrell B.G."/>
            <person name="Spratt B.G."/>
            <person name="Parkhill J."/>
        </authorList>
    </citation>
    <scope>NUCLEOTIDE SEQUENCE [LARGE SCALE GENOMIC DNA]</scope>
    <source>
        <strain>MSSA476</strain>
    </source>
</reference>
<comment type="function">
    <text evidence="1">Modulates transcription in response to changes in cellular NADH/NAD(+) redox state.</text>
</comment>
<comment type="subunit">
    <text evidence="1">Homodimer.</text>
</comment>
<comment type="subcellular location">
    <subcellularLocation>
        <location evidence="1">Cytoplasm</location>
    </subcellularLocation>
</comment>
<comment type="similarity">
    <text evidence="1">Belongs to the transcriptional regulatory Rex family.</text>
</comment>
<accession>Q6G7R1</accession>
<protein>
    <recommendedName>
        <fullName evidence="1">Redox-sensing transcriptional repressor Rex</fullName>
    </recommendedName>
</protein>
<dbReference type="EMBL" id="BX571857">
    <property type="protein sequence ID" value="CAG43758.1"/>
    <property type="molecule type" value="Genomic_DNA"/>
</dbReference>
<dbReference type="RefSeq" id="WP_001283612.1">
    <property type="nucleotide sequence ID" value="NC_002953.3"/>
</dbReference>
<dbReference type="SMR" id="Q6G7R1"/>
<dbReference type="KEGG" id="sas:SAS1951"/>
<dbReference type="HOGENOM" id="CLU_061534_1_1_9"/>
<dbReference type="GO" id="GO:0005737">
    <property type="term" value="C:cytoplasm"/>
    <property type="evidence" value="ECO:0007669"/>
    <property type="project" value="UniProtKB-SubCell"/>
</dbReference>
<dbReference type="GO" id="GO:0003677">
    <property type="term" value="F:DNA binding"/>
    <property type="evidence" value="ECO:0007669"/>
    <property type="project" value="UniProtKB-UniRule"/>
</dbReference>
<dbReference type="GO" id="GO:0003700">
    <property type="term" value="F:DNA-binding transcription factor activity"/>
    <property type="evidence" value="ECO:0007669"/>
    <property type="project" value="UniProtKB-UniRule"/>
</dbReference>
<dbReference type="GO" id="GO:0045892">
    <property type="term" value="P:negative regulation of DNA-templated transcription"/>
    <property type="evidence" value="ECO:0007669"/>
    <property type="project" value="InterPro"/>
</dbReference>
<dbReference type="GO" id="GO:0051775">
    <property type="term" value="P:response to redox state"/>
    <property type="evidence" value="ECO:0007669"/>
    <property type="project" value="InterPro"/>
</dbReference>
<dbReference type="Gene3D" id="3.40.50.720">
    <property type="entry name" value="NAD(P)-binding Rossmann-like Domain"/>
    <property type="match status" value="1"/>
</dbReference>
<dbReference type="Gene3D" id="1.10.10.10">
    <property type="entry name" value="Winged helix-like DNA-binding domain superfamily/Winged helix DNA-binding domain"/>
    <property type="match status" value="1"/>
</dbReference>
<dbReference type="HAMAP" id="MF_01131">
    <property type="entry name" value="Rex"/>
    <property type="match status" value="1"/>
</dbReference>
<dbReference type="InterPro" id="IPR003781">
    <property type="entry name" value="CoA-bd"/>
</dbReference>
<dbReference type="InterPro" id="IPR036291">
    <property type="entry name" value="NAD(P)-bd_dom_sf"/>
</dbReference>
<dbReference type="InterPro" id="IPR009718">
    <property type="entry name" value="Rex_DNA-bd_C_dom"/>
</dbReference>
<dbReference type="InterPro" id="IPR022876">
    <property type="entry name" value="Tscrpt_rep_Rex"/>
</dbReference>
<dbReference type="InterPro" id="IPR036388">
    <property type="entry name" value="WH-like_DNA-bd_sf"/>
</dbReference>
<dbReference type="InterPro" id="IPR036390">
    <property type="entry name" value="WH_DNA-bd_sf"/>
</dbReference>
<dbReference type="NCBIfam" id="NF003989">
    <property type="entry name" value="PRK05472.1-3"/>
    <property type="match status" value="1"/>
</dbReference>
<dbReference type="NCBIfam" id="NF003991">
    <property type="entry name" value="PRK05472.1-5"/>
    <property type="match status" value="1"/>
</dbReference>
<dbReference type="NCBIfam" id="NF003994">
    <property type="entry name" value="PRK05472.2-3"/>
    <property type="match status" value="1"/>
</dbReference>
<dbReference type="NCBIfam" id="NF003995">
    <property type="entry name" value="PRK05472.2-4"/>
    <property type="match status" value="1"/>
</dbReference>
<dbReference type="NCBIfam" id="NF003996">
    <property type="entry name" value="PRK05472.2-5"/>
    <property type="match status" value="1"/>
</dbReference>
<dbReference type="PANTHER" id="PTHR35786">
    <property type="entry name" value="REDOX-SENSING TRANSCRIPTIONAL REPRESSOR REX"/>
    <property type="match status" value="1"/>
</dbReference>
<dbReference type="PANTHER" id="PTHR35786:SF1">
    <property type="entry name" value="REDOX-SENSING TRANSCRIPTIONAL REPRESSOR REX 1"/>
    <property type="match status" value="1"/>
</dbReference>
<dbReference type="Pfam" id="PF02629">
    <property type="entry name" value="CoA_binding"/>
    <property type="match status" value="1"/>
</dbReference>
<dbReference type="Pfam" id="PF06971">
    <property type="entry name" value="Put_DNA-bind_N"/>
    <property type="match status" value="1"/>
</dbReference>
<dbReference type="SMART" id="SM00881">
    <property type="entry name" value="CoA_binding"/>
    <property type="match status" value="1"/>
</dbReference>
<dbReference type="SUPFAM" id="SSF51735">
    <property type="entry name" value="NAD(P)-binding Rossmann-fold domains"/>
    <property type="match status" value="1"/>
</dbReference>
<dbReference type="SUPFAM" id="SSF46785">
    <property type="entry name" value="Winged helix' DNA-binding domain"/>
    <property type="match status" value="1"/>
</dbReference>
<feature type="chain" id="PRO_0000097907" description="Redox-sensing transcriptional repressor Rex">
    <location>
        <begin position="1"/>
        <end position="211"/>
    </location>
</feature>
<feature type="DNA-binding region" description="H-T-H motif" evidence="1">
    <location>
        <begin position="17"/>
        <end position="56"/>
    </location>
</feature>
<feature type="binding site" evidence="1">
    <location>
        <begin position="91"/>
        <end position="96"/>
    </location>
    <ligand>
        <name>NAD(+)</name>
        <dbReference type="ChEBI" id="CHEBI:57540"/>
    </ligand>
</feature>
<keyword id="KW-0963">Cytoplasm</keyword>
<keyword id="KW-0238">DNA-binding</keyword>
<keyword id="KW-0520">NAD</keyword>
<keyword id="KW-0678">Repressor</keyword>
<keyword id="KW-0804">Transcription</keyword>
<keyword id="KW-0805">Transcription regulation</keyword>
<sequence>MSDQVKIPRATLKRLPLYYRFVSSLKSKGIDRVNSKAISDALQIDSATIRRDFSYFGELGKKGYGYNIDSLLDFFKSELSESDMIKIAIVGVGNLGKALLTYNFSIHDDMTITEAFDVKEDVIGQKIGNVIVKDNDELITTLKKEEIDVVILTTPERVAQKVADELVQAGVKGILNFTPGRINTPSDVQVHQIDLGIELQSLLFFMKNYSE</sequence>
<organism>
    <name type="scientific">Staphylococcus aureus (strain MSSA476)</name>
    <dbReference type="NCBI Taxonomy" id="282459"/>
    <lineage>
        <taxon>Bacteria</taxon>
        <taxon>Bacillati</taxon>
        <taxon>Bacillota</taxon>
        <taxon>Bacilli</taxon>
        <taxon>Bacillales</taxon>
        <taxon>Staphylococcaceae</taxon>
        <taxon>Staphylococcus</taxon>
    </lineage>
</organism>
<evidence type="ECO:0000255" key="1">
    <source>
        <dbReference type="HAMAP-Rule" id="MF_01131"/>
    </source>
</evidence>